<comment type="function">
    <text evidence="1">Essential component of the RMI complex, a complex that plays an important role in the processing of homologous recombination intermediates to limit DNA crossover formation in cells. Promotes TOP3A binding to double Holliday junctions (DHJ) and hence stimulates TOP3A-mediated dissolution. Required for BLM phosphorylation during mitosis. Within the BLM complex, required for BLM and TOP3A stability (By similarity).</text>
</comment>
<comment type="subunit">
    <text evidence="1">Component of the RMI complex, containing at least TOP3A, RMI1 and RMI2. The RMI complex interacts with BLM. Directly interacts with RMI2 and TOP3A. May bind DHJ. Interacts (via N-terminal region) with BLM; the interaction is direct (By similarity).</text>
</comment>
<comment type="subcellular location">
    <subcellularLocation>
        <location evidence="1">Nucleus</location>
    </subcellularLocation>
    <text evidence="1">Forms foci in response to DNA damage.</text>
</comment>
<comment type="similarity">
    <text evidence="4">Belongs to the RMI1 family.</text>
</comment>
<protein>
    <recommendedName>
        <fullName>RecQ-mediated genome instability protein 1</fullName>
    </recommendedName>
</protein>
<reference key="1">
    <citation type="journal article" date="2005" name="Science">
        <title>The transcriptional landscape of the mammalian genome.</title>
        <authorList>
            <person name="Carninci P."/>
            <person name="Kasukawa T."/>
            <person name="Katayama S."/>
            <person name="Gough J."/>
            <person name="Frith M.C."/>
            <person name="Maeda N."/>
            <person name="Oyama R."/>
            <person name="Ravasi T."/>
            <person name="Lenhard B."/>
            <person name="Wells C."/>
            <person name="Kodzius R."/>
            <person name="Shimokawa K."/>
            <person name="Bajic V.B."/>
            <person name="Brenner S.E."/>
            <person name="Batalov S."/>
            <person name="Forrest A.R."/>
            <person name="Zavolan M."/>
            <person name="Davis M.J."/>
            <person name="Wilming L.G."/>
            <person name="Aidinis V."/>
            <person name="Allen J.E."/>
            <person name="Ambesi-Impiombato A."/>
            <person name="Apweiler R."/>
            <person name="Aturaliya R.N."/>
            <person name="Bailey T.L."/>
            <person name="Bansal M."/>
            <person name="Baxter L."/>
            <person name="Beisel K.W."/>
            <person name="Bersano T."/>
            <person name="Bono H."/>
            <person name="Chalk A.M."/>
            <person name="Chiu K.P."/>
            <person name="Choudhary V."/>
            <person name="Christoffels A."/>
            <person name="Clutterbuck D.R."/>
            <person name="Crowe M.L."/>
            <person name="Dalla E."/>
            <person name="Dalrymple B.P."/>
            <person name="de Bono B."/>
            <person name="Della Gatta G."/>
            <person name="di Bernardo D."/>
            <person name="Down T."/>
            <person name="Engstrom P."/>
            <person name="Fagiolini M."/>
            <person name="Faulkner G."/>
            <person name="Fletcher C.F."/>
            <person name="Fukushima T."/>
            <person name="Furuno M."/>
            <person name="Futaki S."/>
            <person name="Gariboldi M."/>
            <person name="Georgii-Hemming P."/>
            <person name="Gingeras T.R."/>
            <person name="Gojobori T."/>
            <person name="Green R.E."/>
            <person name="Gustincich S."/>
            <person name="Harbers M."/>
            <person name="Hayashi Y."/>
            <person name="Hensch T.K."/>
            <person name="Hirokawa N."/>
            <person name="Hill D."/>
            <person name="Huminiecki L."/>
            <person name="Iacono M."/>
            <person name="Ikeo K."/>
            <person name="Iwama A."/>
            <person name="Ishikawa T."/>
            <person name="Jakt M."/>
            <person name="Kanapin A."/>
            <person name="Katoh M."/>
            <person name="Kawasawa Y."/>
            <person name="Kelso J."/>
            <person name="Kitamura H."/>
            <person name="Kitano H."/>
            <person name="Kollias G."/>
            <person name="Krishnan S.P."/>
            <person name="Kruger A."/>
            <person name="Kummerfeld S.K."/>
            <person name="Kurochkin I.V."/>
            <person name="Lareau L.F."/>
            <person name="Lazarevic D."/>
            <person name="Lipovich L."/>
            <person name="Liu J."/>
            <person name="Liuni S."/>
            <person name="McWilliam S."/>
            <person name="Madan Babu M."/>
            <person name="Madera M."/>
            <person name="Marchionni L."/>
            <person name="Matsuda H."/>
            <person name="Matsuzawa S."/>
            <person name="Miki H."/>
            <person name="Mignone F."/>
            <person name="Miyake S."/>
            <person name="Morris K."/>
            <person name="Mottagui-Tabar S."/>
            <person name="Mulder N."/>
            <person name="Nakano N."/>
            <person name="Nakauchi H."/>
            <person name="Ng P."/>
            <person name="Nilsson R."/>
            <person name="Nishiguchi S."/>
            <person name="Nishikawa S."/>
            <person name="Nori F."/>
            <person name="Ohara O."/>
            <person name="Okazaki Y."/>
            <person name="Orlando V."/>
            <person name="Pang K.C."/>
            <person name="Pavan W.J."/>
            <person name="Pavesi G."/>
            <person name="Pesole G."/>
            <person name="Petrovsky N."/>
            <person name="Piazza S."/>
            <person name="Reed J."/>
            <person name="Reid J.F."/>
            <person name="Ring B.Z."/>
            <person name="Ringwald M."/>
            <person name="Rost B."/>
            <person name="Ruan Y."/>
            <person name="Salzberg S.L."/>
            <person name="Sandelin A."/>
            <person name="Schneider C."/>
            <person name="Schoenbach C."/>
            <person name="Sekiguchi K."/>
            <person name="Semple C.A."/>
            <person name="Seno S."/>
            <person name="Sessa L."/>
            <person name="Sheng Y."/>
            <person name="Shibata Y."/>
            <person name="Shimada H."/>
            <person name="Shimada K."/>
            <person name="Silva D."/>
            <person name="Sinclair B."/>
            <person name="Sperling S."/>
            <person name="Stupka E."/>
            <person name="Sugiura K."/>
            <person name="Sultana R."/>
            <person name="Takenaka Y."/>
            <person name="Taki K."/>
            <person name="Tammoja K."/>
            <person name="Tan S.L."/>
            <person name="Tang S."/>
            <person name="Taylor M.S."/>
            <person name="Tegner J."/>
            <person name="Teichmann S.A."/>
            <person name="Ueda H.R."/>
            <person name="van Nimwegen E."/>
            <person name="Verardo R."/>
            <person name="Wei C.L."/>
            <person name="Yagi K."/>
            <person name="Yamanishi H."/>
            <person name="Zabarovsky E."/>
            <person name="Zhu S."/>
            <person name="Zimmer A."/>
            <person name="Hide W."/>
            <person name="Bult C."/>
            <person name="Grimmond S.M."/>
            <person name="Teasdale R.D."/>
            <person name="Liu E.T."/>
            <person name="Brusic V."/>
            <person name="Quackenbush J."/>
            <person name="Wahlestedt C."/>
            <person name="Mattick J.S."/>
            <person name="Hume D.A."/>
            <person name="Kai C."/>
            <person name="Sasaki D."/>
            <person name="Tomaru Y."/>
            <person name="Fukuda S."/>
            <person name="Kanamori-Katayama M."/>
            <person name="Suzuki M."/>
            <person name="Aoki J."/>
            <person name="Arakawa T."/>
            <person name="Iida J."/>
            <person name="Imamura K."/>
            <person name="Itoh M."/>
            <person name="Kato T."/>
            <person name="Kawaji H."/>
            <person name="Kawagashira N."/>
            <person name="Kawashima T."/>
            <person name="Kojima M."/>
            <person name="Kondo S."/>
            <person name="Konno H."/>
            <person name="Nakano K."/>
            <person name="Ninomiya N."/>
            <person name="Nishio T."/>
            <person name="Okada M."/>
            <person name="Plessy C."/>
            <person name="Shibata K."/>
            <person name="Shiraki T."/>
            <person name="Suzuki S."/>
            <person name="Tagami M."/>
            <person name="Waki K."/>
            <person name="Watahiki A."/>
            <person name="Okamura-Oho Y."/>
            <person name="Suzuki H."/>
            <person name="Kawai J."/>
            <person name="Hayashizaki Y."/>
        </authorList>
    </citation>
    <scope>NUCLEOTIDE SEQUENCE [LARGE SCALE MRNA]</scope>
    <source>
        <strain>C57BL/6J</strain>
        <tissue>Olfactory bulb</tissue>
        <tissue>Testis</tissue>
        <tissue>Vagina</tissue>
    </source>
</reference>
<reference key="2">
    <citation type="journal article" date="2004" name="Genome Res.">
        <title>The status, quality, and expansion of the NIH full-length cDNA project: the Mammalian Gene Collection (MGC).</title>
        <authorList>
            <consortium name="The MGC Project Team"/>
        </authorList>
    </citation>
    <scope>NUCLEOTIDE SEQUENCE [LARGE SCALE MRNA]</scope>
    <source>
        <strain>Czech II</strain>
        <tissue>Mammary tumor</tissue>
    </source>
</reference>
<gene>
    <name type="primary">Rmi1</name>
</gene>
<dbReference type="EMBL" id="AK016542">
    <property type="protein sequence ID" value="BAB30292.1"/>
    <property type="molecule type" value="mRNA"/>
</dbReference>
<dbReference type="EMBL" id="AK032229">
    <property type="protein sequence ID" value="BAC27772.1"/>
    <property type="molecule type" value="mRNA"/>
</dbReference>
<dbReference type="EMBL" id="AK079457">
    <property type="protein sequence ID" value="BAC37651.1"/>
    <property type="molecule type" value="mRNA"/>
</dbReference>
<dbReference type="EMBL" id="BC037694">
    <property type="protein sequence ID" value="AAH37694.1"/>
    <property type="molecule type" value="mRNA"/>
</dbReference>
<dbReference type="CCDS" id="CCDS26571.1"/>
<dbReference type="RefSeq" id="NP_001161720.1">
    <property type="nucleotide sequence ID" value="NM_001168248.2"/>
</dbReference>
<dbReference type="RefSeq" id="NP_083180.3">
    <property type="nucleotide sequence ID" value="NM_028904.3"/>
</dbReference>
<dbReference type="RefSeq" id="XP_006517483.1">
    <property type="nucleotide sequence ID" value="XM_006517420.5"/>
</dbReference>
<dbReference type="RefSeq" id="XP_036014091.1">
    <property type="nucleotide sequence ID" value="XM_036158198.1"/>
</dbReference>
<dbReference type="SMR" id="Q9D4G9"/>
<dbReference type="BioGRID" id="216710">
    <property type="interactions" value="9"/>
</dbReference>
<dbReference type="ComplexPortal" id="CPX-3303">
    <property type="entry name" value="BTR double Holliday Junction dissolution complex"/>
</dbReference>
<dbReference type="FunCoup" id="Q9D4G9">
    <property type="interactions" value="3402"/>
</dbReference>
<dbReference type="IntAct" id="Q9D4G9">
    <property type="interactions" value="6"/>
</dbReference>
<dbReference type="STRING" id="10090.ENSMUSP00000153050"/>
<dbReference type="GlyGen" id="Q9D4G9">
    <property type="glycosylation" value="2 sites, 2 N-linked glycans (2 sites)"/>
</dbReference>
<dbReference type="iPTMnet" id="Q9D4G9"/>
<dbReference type="PhosphoSitePlus" id="Q9D4G9"/>
<dbReference type="jPOST" id="Q9D4G9"/>
<dbReference type="PaxDb" id="10090-ENSMUSP00000041035"/>
<dbReference type="PeptideAtlas" id="Q9D4G9"/>
<dbReference type="ProteomicsDB" id="299913"/>
<dbReference type="Pumba" id="Q9D4G9"/>
<dbReference type="Antibodypedia" id="27643">
    <property type="antibodies" value="169 antibodies from 24 providers"/>
</dbReference>
<dbReference type="Ensembl" id="ENSMUST00000042450.10">
    <property type="protein sequence ID" value="ENSMUSP00000041035.9"/>
    <property type="gene ID" value="ENSMUSG00000035367.10"/>
</dbReference>
<dbReference type="Ensembl" id="ENSMUST00000224479.2">
    <property type="protein sequence ID" value="ENSMUSP00000153050.2"/>
    <property type="gene ID" value="ENSMUSG00000035367.10"/>
</dbReference>
<dbReference type="Ensembl" id="ENSMUST00000225815.2">
    <property type="protein sequence ID" value="ENSMUSP00000153621.2"/>
    <property type="gene ID" value="ENSMUSG00000035367.10"/>
</dbReference>
<dbReference type="Ensembl" id="ENSMUST00000225828.2">
    <property type="protein sequence ID" value="ENSMUSP00000153675.2"/>
    <property type="gene ID" value="ENSMUSG00000035367.10"/>
</dbReference>
<dbReference type="GeneID" id="74386"/>
<dbReference type="KEGG" id="mmu:74386"/>
<dbReference type="UCSC" id="uc007qua.2">
    <property type="organism name" value="mouse"/>
</dbReference>
<dbReference type="AGR" id="MGI:1921636"/>
<dbReference type="CTD" id="80010"/>
<dbReference type="MGI" id="MGI:1921636">
    <property type="gene designation" value="Rmi1"/>
</dbReference>
<dbReference type="VEuPathDB" id="HostDB:ENSMUSG00000035367"/>
<dbReference type="eggNOG" id="KOG3683">
    <property type="taxonomic scope" value="Eukaryota"/>
</dbReference>
<dbReference type="GeneTree" id="ENSGT00940000161055"/>
<dbReference type="HOGENOM" id="CLU_030961_0_0_1"/>
<dbReference type="InParanoid" id="Q9D4G9"/>
<dbReference type="OMA" id="SATWHVK"/>
<dbReference type="OrthoDB" id="341511at2759"/>
<dbReference type="PhylomeDB" id="Q9D4G9"/>
<dbReference type="TreeFam" id="TF316491"/>
<dbReference type="Reactome" id="R-MMU-5685938">
    <property type="pathway name" value="HDR through Single Strand Annealing (SSA)"/>
</dbReference>
<dbReference type="Reactome" id="R-MMU-5685942">
    <property type="pathway name" value="HDR through Homologous Recombination (HRR)"/>
</dbReference>
<dbReference type="Reactome" id="R-MMU-5693568">
    <property type="pathway name" value="Resolution of D-loop Structures through Holliday Junction Intermediates"/>
</dbReference>
<dbReference type="Reactome" id="R-MMU-5693579">
    <property type="pathway name" value="Homologous DNA Pairing and Strand Exchange"/>
</dbReference>
<dbReference type="Reactome" id="R-MMU-5693607">
    <property type="pathway name" value="Processing of DNA double-strand break ends"/>
</dbReference>
<dbReference type="Reactome" id="R-MMU-5693616">
    <property type="pathway name" value="Presynaptic phase of homologous DNA pairing and strand exchange"/>
</dbReference>
<dbReference type="Reactome" id="R-MMU-6804756">
    <property type="pathway name" value="Regulation of TP53 Activity through Phosphorylation"/>
</dbReference>
<dbReference type="Reactome" id="R-MMU-69473">
    <property type="pathway name" value="G2/M DNA damage checkpoint"/>
</dbReference>
<dbReference type="BioGRID-ORCS" id="74386">
    <property type="hits" value="10 hits in 77 CRISPR screens"/>
</dbReference>
<dbReference type="ChiTaRS" id="Rmi1">
    <property type="organism name" value="mouse"/>
</dbReference>
<dbReference type="PRO" id="PR:Q9D4G9"/>
<dbReference type="Proteomes" id="UP000000589">
    <property type="component" value="Chromosome 13"/>
</dbReference>
<dbReference type="RNAct" id="Q9D4G9">
    <property type="molecule type" value="protein"/>
</dbReference>
<dbReference type="Bgee" id="ENSMUSG00000035367">
    <property type="expression patterns" value="Expressed in animal zygote and 227 other cell types or tissues"/>
</dbReference>
<dbReference type="GO" id="GO:0016604">
    <property type="term" value="C:nuclear body"/>
    <property type="evidence" value="ECO:0007669"/>
    <property type="project" value="Ensembl"/>
</dbReference>
<dbReference type="GO" id="GO:0005634">
    <property type="term" value="C:nucleus"/>
    <property type="evidence" value="ECO:0000303"/>
    <property type="project" value="ComplexPortal"/>
</dbReference>
<dbReference type="GO" id="GO:0031422">
    <property type="term" value="C:RecQ family helicase-topoisomerase III complex"/>
    <property type="evidence" value="ECO:0000266"/>
    <property type="project" value="ComplexPortal"/>
</dbReference>
<dbReference type="GO" id="GO:0000166">
    <property type="term" value="F:nucleotide binding"/>
    <property type="evidence" value="ECO:0007669"/>
    <property type="project" value="InterPro"/>
</dbReference>
<dbReference type="GO" id="GO:0006260">
    <property type="term" value="P:DNA replication"/>
    <property type="evidence" value="ECO:0007669"/>
    <property type="project" value="UniProtKB-KW"/>
</dbReference>
<dbReference type="GO" id="GO:0000724">
    <property type="term" value="P:double-strand break repair via homologous recombination"/>
    <property type="evidence" value="ECO:0000266"/>
    <property type="project" value="ComplexPortal"/>
</dbReference>
<dbReference type="GO" id="GO:0042593">
    <property type="term" value="P:glucose homeostasis"/>
    <property type="evidence" value="ECO:0000315"/>
    <property type="project" value="MGI"/>
</dbReference>
<dbReference type="GO" id="GO:0035264">
    <property type="term" value="P:multicellular organism growth"/>
    <property type="evidence" value="ECO:0000315"/>
    <property type="project" value="MGI"/>
</dbReference>
<dbReference type="GO" id="GO:0002023">
    <property type="term" value="P:reduction of food intake in response to dietary excess"/>
    <property type="evidence" value="ECO:0000315"/>
    <property type="project" value="MGI"/>
</dbReference>
<dbReference type="GO" id="GO:0071139">
    <property type="term" value="P:resolution of DNA recombination intermediates"/>
    <property type="evidence" value="ECO:0000266"/>
    <property type="project" value="ComplexPortal"/>
</dbReference>
<dbReference type="GO" id="GO:0002021">
    <property type="term" value="P:response to dietary excess"/>
    <property type="evidence" value="ECO:0000315"/>
    <property type="project" value="MGI"/>
</dbReference>
<dbReference type="GO" id="GO:0009749">
    <property type="term" value="P:response to glucose"/>
    <property type="evidence" value="ECO:0000315"/>
    <property type="project" value="MGI"/>
</dbReference>
<dbReference type="FunFam" id="1.10.8.1020:FF:000001">
    <property type="entry name" value="RecQ-mediated genome instability protein 1"/>
    <property type="match status" value="1"/>
</dbReference>
<dbReference type="FunFam" id="2.40.50.510:FF:000001">
    <property type="entry name" value="RecQ-mediated genome instability protein 1"/>
    <property type="match status" value="1"/>
</dbReference>
<dbReference type="FunFam" id="2.40.50.770:FF:000002">
    <property type="entry name" value="recQ-mediated genome instability protein 1"/>
    <property type="match status" value="1"/>
</dbReference>
<dbReference type="Gene3D" id="2.40.50.510">
    <property type="match status" value="1"/>
</dbReference>
<dbReference type="Gene3D" id="1.10.8.1020">
    <property type="entry name" value="RecQ-mediated genome instability protein 1, N-terminal domain"/>
    <property type="match status" value="1"/>
</dbReference>
<dbReference type="Gene3D" id="2.40.50.770">
    <property type="entry name" value="RecQ-mediated genome instability protein Rmi1, C-terminal domain"/>
    <property type="match status" value="1"/>
</dbReference>
<dbReference type="InterPro" id="IPR032199">
    <property type="entry name" value="RMI1_C"/>
</dbReference>
<dbReference type="InterPro" id="IPR049363">
    <property type="entry name" value="RMI1_N"/>
</dbReference>
<dbReference type="InterPro" id="IPR042470">
    <property type="entry name" value="RMI1_N_C_sf"/>
</dbReference>
<dbReference type="InterPro" id="IPR044881">
    <property type="entry name" value="RMI1_N_N_sf"/>
</dbReference>
<dbReference type="InterPro" id="IPR013894">
    <property type="entry name" value="RMI1_OB"/>
</dbReference>
<dbReference type="PANTHER" id="PTHR14790:SF15">
    <property type="entry name" value="RECQ-MEDIATED GENOME INSTABILITY PROTEIN 1"/>
    <property type="match status" value="1"/>
</dbReference>
<dbReference type="PANTHER" id="PTHR14790">
    <property type="entry name" value="RECQ-MEDIATED GENOME INSTABILITY PROTEIN 1 RMI1"/>
    <property type="match status" value="1"/>
</dbReference>
<dbReference type="Pfam" id="PF16099">
    <property type="entry name" value="RMI1_C"/>
    <property type="match status" value="1"/>
</dbReference>
<dbReference type="Pfam" id="PF08585">
    <property type="entry name" value="RMI1_N_C"/>
    <property type="match status" value="1"/>
</dbReference>
<dbReference type="Pfam" id="PF21000">
    <property type="entry name" value="RMI1_N_N"/>
    <property type="match status" value="1"/>
</dbReference>
<dbReference type="SMART" id="SM01161">
    <property type="entry name" value="DUF1767"/>
    <property type="match status" value="1"/>
</dbReference>
<evidence type="ECO:0000250" key="1"/>
<evidence type="ECO:0000250" key="2">
    <source>
        <dbReference type="UniProtKB" id="Q9H9A7"/>
    </source>
</evidence>
<evidence type="ECO:0000256" key="3">
    <source>
        <dbReference type="SAM" id="MobiDB-lite"/>
    </source>
</evidence>
<evidence type="ECO:0000305" key="4"/>
<keyword id="KW-0007">Acetylation</keyword>
<keyword id="KW-0235">DNA replication</keyword>
<keyword id="KW-1017">Isopeptide bond</keyword>
<keyword id="KW-0539">Nucleus</keyword>
<keyword id="KW-0597">Phosphoprotein</keyword>
<keyword id="KW-1185">Reference proteome</keyword>
<keyword id="KW-0832">Ubl conjugation</keyword>
<sequence>MSVASAVLRVETWLLATWHVKVPPMWLEACVNWIQEENNNATLSQAQINKQVLEQWLLTDLRDLEHPLLPDDILELPKGELNGFYALQINSLVDVSQPAYSQIQKLRGKNTTNDLVSAETQSTPKPWEVRPSRMLMLQLTDGVTHIQGMEYQSIPALHSGLPPGTKILVRGCILFRLGVLLLKPENVKVLGGEVDGLSEENAQEKVLARLIGELDPTVPVIPNNSIHNVPKVSGGLDAVLGPSDEELLASLDESEESAANNDVAMERSCFSTGTSSNTTPTNPSGFEPGCNISSRPKEKPPNQPTHFTDGEFDDFSLEEALLLEETVQKEQMETKASQPLTLKENTGKCMEIFSHKPSSLNHTALIHKQGNSNFDEKTSEQMIHEDKFFDCASTRNHHKRFSAHDFTNDSKISEVDDAAQQTLSSSNVHCLRNKILNRKLDLSEKSSQISKENGHPFQACSSRSFENNTYLSIGMDLHSPPFIYLSVLMARKPKEVTTVTVKAFIVTLTGNLSSSGGFWGVTAKVSDGTAYLDVDFIDEILTSMIGYSVPEMKQLRKDPLKYKTFLEGLQKCQRDLIDLCCLMTISYDPSSCKGVVLELQDVGMEHVENLKKRLNK</sequence>
<feature type="chain" id="PRO_0000227547" description="RecQ-mediated genome instability protein 1">
    <location>
        <begin position="1"/>
        <end position="616"/>
    </location>
</feature>
<feature type="region of interest" description="Disordered" evidence="3">
    <location>
        <begin position="269"/>
        <end position="311"/>
    </location>
</feature>
<feature type="compositionally biased region" description="Low complexity" evidence="3">
    <location>
        <begin position="271"/>
        <end position="285"/>
    </location>
</feature>
<feature type="modified residue" description="N-acetylmethionine" evidence="2">
    <location>
        <position position="1"/>
    </location>
</feature>
<feature type="modified residue" description="Phosphoserine" evidence="2">
    <location>
        <position position="225"/>
    </location>
</feature>
<feature type="modified residue" description="Phosphoserine" evidence="2">
    <location>
        <position position="293"/>
    </location>
</feature>
<feature type="cross-link" description="Glycyl lysine isopeptide (Lys-Gly) (interchain with G-Cter in SUMO2)" evidence="2">
    <location>
        <position position="335"/>
    </location>
</feature>
<feature type="cross-link" description="Glycyl lysine isopeptide (Lys-Gly) (interchain with G-Cter in SUMO2)" evidence="2">
    <location>
        <position position="387"/>
    </location>
</feature>
<feature type="sequence conflict" description="In Ref. 2; AAH37694." evidence="4" ref="2">
    <original>I</original>
    <variation>V</variation>
    <location>
        <position position="73"/>
    </location>
</feature>
<feature type="sequence conflict" description="In Ref. 1; BAC37651." evidence="4" ref="1">
    <original>L</original>
    <variation>S</variation>
    <location>
        <position position="74"/>
    </location>
</feature>
<feature type="sequence conflict" description="In Ref. 2; AAH37694." evidence="4" ref="2">
    <original>R</original>
    <variation>H</variation>
    <location>
        <position position="170"/>
    </location>
</feature>
<feature type="sequence conflict" description="In Ref. 2; AAH37694." evidence="4" ref="2">
    <original>D</original>
    <variation>G</variation>
    <location>
        <position position="252"/>
    </location>
</feature>
<feature type="sequence conflict" description="In Ref. 2; AAH37694." evidence="4" ref="2">
    <original>K</original>
    <variation>E</variation>
    <location>
        <position position="411"/>
    </location>
</feature>
<proteinExistence type="evidence at transcript level"/>
<accession>Q9D4G9</accession>
<accession>Q8C560</accession>
<accession>Q8CI20</accession>
<name>RMI1_MOUSE</name>
<organism>
    <name type="scientific">Mus musculus</name>
    <name type="common">Mouse</name>
    <dbReference type="NCBI Taxonomy" id="10090"/>
    <lineage>
        <taxon>Eukaryota</taxon>
        <taxon>Metazoa</taxon>
        <taxon>Chordata</taxon>
        <taxon>Craniata</taxon>
        <taxon>Vertebrata</taxon>
        <taxon>Euteleostomi</taxon>
        <taxon>Mammalia</taxon>
        <taxon>Eutheria</taxon>
        <taxon>Euarchontoglires</taxon>
        <taxon>Glires</taxon>
        <taxon>Rodentia</taxon>
        <taxon>Myomorpha</taxon>
        <taxon>Muroidea</taxon>
        <taxon>Muridae</taxon>
        <taxon>Murinae</taxon>
        <taxon>Mus</taxon>
        <taxon>Mus</taxon>
    </lineage>
</organism>